<protein>
    <recommendedName>
        <fullName evidence="2">Phosphoribosylformylglycinamidine cyclo-ligase</fullName>
        <ecNumber evidence="2">6.3.3.1</ecNumber>
    </recommendedName>
    <alternativeName>
        <fullName evidence="2">AIR synthase</fullName>
    </alternativeName>
    <alternativeName>
        <fullName evidence="2">AIRS</fullName>
    </alternativeName>
    <alternativeName>
        <fullName evidence="2">Phosphoribosyl-aminoimidazole synthetase</fullName>
    </alternativeName>
</protein>
<comment type="catalytic activity">
    <reaction evidence="2">
        <text>2-formamido-N(1)-(5-O-phospho-beta-D-ribosyl)acetamidine + ATP = 5-amino-1-(5-phospho-beta-D-ribosyl)imidazole + ADP + phosphate + H(+)</text>
        <dbReference type="Rhea" id="RHEA:23032"/>
        <dbReference type="ChEBI" id="CHEBI:15378"/>
        <dbReference type="ChEBI" id="CHEBI:30616"/>
        <dbReference type="ChEBI" id="CHEBI:43474"/>
        <dbReference type="ChEBI" id="CHEBI:137981"/>
        <dbReference type="ChEBI" id="CHEBI:147287"/>
        <dbReference type="ChEBI" id="CHEBI:456216"/>
        <dbReference type="EC" id="6.3.3.1"/>
    </reaction>
</comment>
<comment type="pathway">
    <text evidence="2">Purine metabolism; IMP biosynthesis via de novo pathway; 5-amino-1-(5-phospho-D-ribosyl)imidazole from N(2)-formyl-N(1)-(5-phospho-D-ribosyl)glycinamide: step 2/2.</text>
</comment>
<comment type="subcellular location">
    <subcellularLocation>
        <location evidence="2">Cytoplasm</location>
    </subcellularLocation>
</comment>
<comment type="similarity">
    <text evidence="2">Belongs to the AIR synthase family.</text>
</comment>
<reference key="1">
    <citation type="journal article" date="2005" name="Nucleic Acids Res.">
        <title>Genome dynamics and diversity of Shigella species, the etiologic agents of bacillary dysentery.</title>
        <authorList>
            <person name="Yang F."/>
            <person name="Yang J."/>
            <person name="Zhang X."/>
            <person name="Chen L."/>
            <person name="Jiang Y."/>
            <person name="Yan Y."/>
            <person name="Tang X."/>
            <person name="Wang J."/>
            <person name="Xiong Z."/>
            <person name="Dong J."/>
            <person name="Xue Y."/>
            <person name="Zhu Y."/>
            <person name="Xu X."/>
            <person name="Sun L."/>
            <person name="Chen S."/>
            <person name="Nie H."/>
            <person name="Peng J."/>
            <person name="Xu J."/>
            <person name="Wang Y."/>
            <person name="Yuan Z."/>
            <person name="Wen Y."/>
            <person name="Yao Z."/>
            <person name="Shen Y."/>
            <person name="Qiang B."/>
            <person name="Hou Y."/>
            <person name="Yu J."/>
            <person name="Jin Q."/>
        </authorList>
    </citation>
    <scope>NUCLEOTIDE SEQUENCE [LARGE SCALE GENOMIC DNA]</scope>
    <source>
        <strain>Sd197</strain>
    </source>
</reference>
<feature type="initiator methionine" description="Removed" evidence="1">
    <location>
        <position position="1"/>
    </location>
</feature>
<feature type="chain" id="PRO_0000258403" description="Phosphoribosylformylglycinamidine cyclo-ligase">
    <location>
        <begin position="2"/>
        <end position="345"/>
    </location>
</feature>
<keyword id="KW-0067">ATP-binding</keyword>
<keyword id="KW-0963">Cytoplasm</keyword>
<keyword id="KW-0436">Ligase</keyword>
<keyword id="KW-0547">Nucleotide-binding</keyword>
<keyword id="KW-0658">Purine biosynthesis</keyword>
<keyword id="KW-1185">Reference proteome</keyword>
<name>PUR5_SHIDS</name>
<dbReference type="EC" id="6.3.3.1" evidence="2"/>
<dbReference type="EMBL" id="CP000034">
    <property type="protein sequence ID" value="ABB62736.1"/>
    <property type="molecule type" value="Genomic_DNA"/>
</dbReference>
<dbReference type="RefSeq" id="WP_005017486.1">
    <property type="nucleotide sequence ID" value="NC_007606.1"/>
</dbReference>
<dbReference type="RefSeq" id="YP_404227.1">
    <property type="nucleotide sequence ID" value="NC_007606.1"/>
</dbReference>
<dbReference type="SMR" id="Q32D69"/>
<dbReference type="STRING" id="300267.SDY_2688"/>
<dbReference type="EnsemblBacteria" id="ABB62736">
    <property type="protein sequence ID" value="ABB62736"/>
    <property type="gene ID" value="SDY_2688"/>
</dbReference>
<dbReference type="KEGG" id="sdy:SDY_2688"/>
<dbReference type="PATRIC" id="fig|300267.13.peg.3243"/>
<dbReference type="HOGENOM" id="CLU_047116_0_0_6"/>
<dbReference type="UniPathway" id="UPA00074">
    <property type="reaction ID" value="UER00129"/>
</dbReference>
<dbReference type="Proteomes" id="UP000002716">
    <property type="component" value="Chromosome"/>
</dbReference>
<dbReference type="GO" id="GO:0005829">
    <property type="term" value="C:cytosol"/>
    <property type="evidence" value="ECO:0007669"/>
    <property type="project" value="TreeGrafter"/>
</dbReference>
<dbReference type="GO" id="GO:0005524">
    <property type="term" value="F:ATP binding"/>
    <property type="evidence" value="ECO:0007669"/>
    <property type="project" value="UniProtKB-KW"/>
</dbReference>
<dbReference type="GO" id="GO:0004637">
    <property type="term" value="F:phosphoribosylamine-glycine ligase activity"/>
    <property type="evidence" value="ECO:0007669"/>
    <property type="project" value="TreeGrafter"/>
</dbReference>
<dbReference type="GO" id="GO:0004641">
    <property type="term" value="F:phosphoribosylformylglycinamidine cyclo-ligase activity"/>
    <property type="evidence" value="ECO:0007669"/>
    <property type="project" value="UniProtKB-UniRule"/>
</dbReference>
<dbReference type="GO" id="GO:0006189">
    <property type="term" value="P:'de novo' IMP biosynthetic process"/>
    <property type="evidence" value="ECO:0007669"/>
    <property type="project" value="UniProtKB-UniRule"/>
</dbReference>
<dbReference type="GO" id="GO:0046084">
    <property type="term" value="P:adenine biosynthetic process"/>
    <property type="evidence" value="ECO:0007669"/>
    <property type="project" value="TreeGrafter"/>
</dbReference>
<dbReference type="CDD" id="cd02196">
    <property type="entry name" value="PurM"/>
    <property type="match status" value="1"/>
</dbReference>
<dbReference type="FunFam" id="3.30.1330.10:FF:000001">
    <property type="entry name" value="Phosphoribosylformylglycinamidine cyclo-ligase"/>
    <property type="match status" value="1"/>
</dbReference>
<dbReference type="FunFam" id="3.90.650.10:FF:000001">
    <property type="entry name" value="Phosphoribosylformylglycinamidine cyclo-ligase"/>
    <property type="match status" value="1"/>
</dbReference>
<dbReference type="Gene3D" id="3.90.650.10">
    <property type="entry name" value="PurM-like C-terminal domain"/>
    <property type="match status" value="1"/>
</dbReference>
<dbReference type="Gene3D" id="3.30.1330.10">
    <property type="entry name" value="PurM-like, N-terminal domain"/>
    <property type="match status" value="1"/>
</dbReference>
<dbReference type="HAMAP" id="MF_00741">
    <property type="entry name" value="AIRS"/>
    <property type="match status" value="1"/>
</dbReference>
<dbReference type="InterPro" id="IPR010918">
    <property type="entry name" value="PurM-like_C_dom"/>
</dbReference>
<dbReference type="InterPro" id="IPR036676">
    <property type="entry name" value="PurM-like_C_sf"/>
</dbReference>
<dbReference type="InterPro" id="IPR016188">
    <property type="entry name" value="PurM-like_N"/>
</dbReference>
<dbReference type="InterPro" id="IPR036921">
    <property type="entry name" value="PurM-like_N_sf"/>
</dbReference>
<dbReference type="InterPro" id="IPR004733">
    <property type="entry name" value="PurM_cligase"/>
</dbReference>
<dbReference type="NCBIfam" id="TIGR00878">
    <property type="entry name" value="purM"/>
    <property type="match status" value="1"/>
</dbReference>
<dbReference type="PANTHER" id="PTHR10520:SF12">
    <property type="entry name" value="TRIFUNCTIONAL PURINE BIOSYNTHETIC PROTEIN ADENOSINE-3"/>
    <property type="match status" value="1"/>
</dbReference>
<dbReference type="PANTHER" id="PTHR10520">
    <property type="entry name" value="TRIFUNCTIONAL PURINE BIOSYNTHETIC PROTEIN ADENOSINE-3-RELATED"/>
    <property type="match status" value="1"/>
</dbReference>
<dbReference type="Pfam" id="PF00586">
    <property type="entry name" value="AIRS"/>
    <property type="match status" value="1"/>
</dbReference>
<dbReference type="Pfam" id="PF02769">
    <property type="entry name" value="AIRS_C"/>
    <property type="match status" value="1"/>
</dbReference>
<dbReference type="SUPFAM" id="SSF56042">
    <property type="entry name" value="PurM C-terminal domain-like"/>
    <property type="match status" value="1"/>
</dbReference>
<dbReference type="SUPFAM" id="SSF55326">
    <property type="entry name" value="PurM N-terminal domain-like"/>
    <property type="match status" value="1"/>
</dbReference>
<sequence>MTDKTSLSYKDAGVDIDAGNALVGRIKGVVKKTRRPEVMGGLGGFGALCALPQKYREPVLVSGTDGVGTKLRLAMDLKRHDTIGIDLVAMCVNDLVVQGAEPLFFLDYYATGKLDVDTASAVISGIAEGCLQSGCSLVGGETAEMPGMYHGEDYDVAGFCVGVVEKSEIIDGSKVSDGDVLIALGSSGPHSNGYSLVRKILEVSGCDPQTTELDGKPLADHLLAPTRIYVKSVLELIEKVDVHAIAHLTGGGFWENIPRVLPDNTQAVIDESSWQWPEVFNWLQTAGNVERHEMYRTFNCGVGMIIALPAPEVDKALALLNANGENTWKIGIIKASDSEQRVVIE</sequence>
<organism>
    <name type="scientific">Shigella dysenteriae serotype 1 (strain Sd197)</name>
    <dbReference type="NCBI Taxonomy" id="300267"/>
    <lineage>
        <taxon>Bacteria</taxon>
        <taxon>Pseudomonadati</taxon>
        <taxon>Pseudomonadota</taxon>
        <taxon>Gammaproteobacteria</taxon>
        <taxon>Enterobacterales</taxon>
        <taxon>Enterobacteriaceae</taxon>
        <taxon>Shigella</taxon>
    </lineage>
</organism>
<proteinExistence type="inferred from homology"/>
<gene>
    <name evidence="2" type="primary">purM</name>
    <name type="ordered locus">SDY_2688</name>
</gene>
<evidence type="ECO:0000250" key="1"/>
<evidence type="ECO:0000255" key="2">
    <source>
        <dbReference type="HAMAP-Rule" id="MF_00741"/>
    </source>
</evidence>
<accession>Q32D69</accession>